<dbReference type="EMBL" id="AP006715">
    <property type="protein sequence ID" value="BAE92462.1"/>
    <property type="molecule type" value="Genomic_DNA"/>
</dbReference>
<dbReference type="RefSeq" id="YP_537019.1">
    <property type="nucleotide sequence ID" value="NC_007932.1"/>
</dbReference>
<dbReference type="SMR" id="Q1XDE9"/>
<dbReference type="GeneID" id="3978796"/>
<dbReference type="GO" id="GO:0009507">
    <property type="term" value="C:chloroplast"/>
    <property type="evidence" value="ECO:0007669"/>
    <property type="project" value="UniProtKB-SubCell"/>
</dbReference>
<dbReference type="GO" id="GO:0015934">
    <property type="term" value="C:large ribosomal subunit"/>
    <property type="evidence" value="ECO:0007669"/>
    <property type="project" value="InterPro"/>
</dbReference>
<dbReference type="GO" id="GO:0019843">
    <property type="term" value="F:rRNA binding"/>
    <property type="evidence" value="ECO:0007669"/>
    <property type="project" value="UniProtKB-UniRule"/>
</dbReference>
<dbReference type="GO" id="GO:0003735">
    <property type="term" value="F:structural constituent of ribosome"/>
    <property type="evidence" value="ECO:0007669"/>
    <property type="project" value="InterPro"/>
</dbReference>
<dbReference type="GO" id="GO:0006412">
    <property type="term" value="P:translation"/>
    <property type="evidence" value="ECO:0007669"/>
    <property type="project" value="UniProtKB-UniRule"/>
</dbReference>
<dbReference type="CDD" id="cd00403">
    <property type="entry name" value="Ribosomal_L1"/>
    <property type="match status" value="1"/>
</dbReference>
<dbReference type="FunFam" id="3.40.50.790:FF:000001">
    <property type="entry name" value="50S ribosomal protein L1"/>
    <property type="match status" value="1"/>
</dbReference>
<dbReference type="Gene3D" id="3.30.190.20">
    <property type="match status" value="1"/>
</dbReference>
<dbReference type="Gene3D" id="3.40.50.790">
    <property type="match status" value="1"/>
</dbReference>
<dbReference type="HAMAP" id="MF_01318_B">
    <property type="entry name" value="Ribosomal_uL1_B"/>
    <property type="match status" value="1"/>
</dbReference>
<dbReference type="InterPro" id="IPR005878">
    <property type="entry name" value="Ribosom_uL1_bac-type"/>
</dbReference>
<dbReference type="InterPro" id="IPR002143">
    <property type="entry name" value="Ribosomal_uL1"/>
</dbReference>
<dbReference type="InterPro" id="IPR023674">
    <property type="entry name" value="Ribosomal_uL1-like"/>
</dbReference>
<dbReference type="InterPro" id="IPR028364">
    <property type="entry name" value="Ribosomal_uL1/biogenesis"/>
</dbReference>
<dbReference type="InterPro" id="IPR016095">
    <property type="entry name" value="Ribosomal_uL1_3-a/b-sand"/>
</dbReference>
<dbReference type="InterPro" id="IPR023673">
    <property type="entry name" value="Ribosomal_uL1_CS"/>
</dbReference>
<dbReference type="NCBIfam" id="TIGR01169">
    <property type="entry name" value="rplA_bact"/>
    <property type="match status" value="1"/>
</dbReference>
<dbReference type="PANTHER" id="PTHR36427">
    <property type="entry name" value="54S RIBOSOMAL PROTEIN L1, MITOCHONDRIAL"/>
    <property type="match status" value="1"/>
</dbReference>
<dbReference type="PANTHER" id="PTHR36427:SF3">
    <property type="entry name" value="LARGE RIBOSOMAL SUBUNIT PROTEIN UL1M"/>
    <property type="match status" value="1"/>
</dbReference>
<dbReference type="Pfam" id="PF00687">
    <property type="entry name" value="Ribosomal_L1"/>
    <property type="match status" value="1"/>
</dbReference>
<dbReference type="PIRSF" id="PIRSF002155">
    <property type="entry name" value="Ribosomal_L1"/>
    <property type="match status" value="1"/>
</dbReference>
<dbReference type="SUPFAM" id="SSF56808">
    <property type="entry name" value="Ribosomal protein L1"/>
    <property type="match status" value="1"/>
</dbReference>
<dbReference type="PROSITE" id="PS01199">
    <property type="entry name" value="RIBOSOMAL_L1"/>
    <property type="match status" value="1"/>
</dbReference>
<keyword id="KW-0150">Chloroplast</keyword>
<keyword id="KW-0934">Plastid</keyword>
<keyword id="KW-0687">Ribonucleoprotein</keyword>
<keyword id="KW-0689">Ribosomal protein</keyword>
<keyword id="KW-0694">RNA-binding</keyword>
<keyword id="KW-0699">rRNA-binding</keyword>
<geneLocation type="chloroplast"/>
<accession>Q1XDE9</accession>
<reference key="1">
    <citation type="submission" date="2003-11" db="EMBL/GenBank/DDBJ databases">
        <title>Whole genome sequence of Porphyra yezoensis chloroplast.</title>
        <authorList>
            <person name="Kunimoto M."/>
            <person name="Morishima K."/>
            <person name="Yoshikawa M."/>
            <person name="Fukuda S."/>
            <person name="Kobayashi T."/>
            <person name="Kobayashi M."/>
            <person name="Okazaki T."/>
            <person name="Ohara I."/>
            <person name="Nakayama I."/>
        </authorList>
    </citation>
    <scope>NUCLEOTIDE SEQUENCE [LARGE SCALE GENOMIC DNA]</scope>
    <source>
        <strain>U-51</strain>
    </source>
</reference>
<comment type="function">
    <text evidence="2">Binds directly to 23S rRNA. Might be involved in E site tRNA release (Potential).</text>
</comment>
<comment type="subunit">
    <text evidence="1">Part of the 50S ribosomal subunit.</text>
</comment>
<comment type="subcellular location">
    <subcellularLocation>
        <location>Plastid</location>
        <location>Chloroplast</location>
    </subcellularLocation>
</comment>
<comment type="similarity">
    <text evidence="2">Belongs to the universal ribosomal protein uL1 family.</text>
</comment>
<gene>
    <name type="primary">rpl1</name>
</gene>
<name>RK1_PYRYE</name>
<organism>
    <name type="scientific">Pyropia yezoensis</name>
    <name type="common">Susabi-nori</name>
    <name type="synonym">Porphyra yezoensis</name>
    <dbReference type="NCBI Taxonomy" id="2788"/>
    <lineage>
        <taxon>Eukaryota</taxon>
        <taxon>Rhodophyta</taxon>
        <taxon>Bangiophyceae</taxon>
        <taxon>Bangiales</taxon>
        <taxon>Bangiaceae</taxon>
        <taxon>Pyropia</taxon>
    </lineage>
</organism>
<feature type="chain" id="PRO_0000276398" description="Large ribosomal subunit protein uL1c">
    <location>
        <begin position="1"/>
        <end position="229"/>
    </location>
</feature>
<sequence length="229" mass="24866">MKKFSRRLTTLKSKVEPKLYTINEAVSILKATSNAKFKETAEAHIALGLNPKYADQQLRATVILPKGTGKLIKVAVIAKGEKLTEAISAGADVSGSEELIDEILKGRLDFDKLIATPDVMPLIAKLGRVLGPRGLMPSPKAGTVTLDVAKAVNEFKGGKVEYRVDRTGIIHVPFGKSSFSQEDLVLNLQTIKESIDRNKPSGAKGKYWKTFFLSSTMGPSIQIDITSLL</sequence>
<evidence type="ECO:0000250" key="1"/>
<evidence type="ECO:0000305" key="2"/>
<protein>
    <recommendedName>
        <fullName evidence="2">Large ribosomal subunit protein uL1c</fullName>
    </recommendedName>
    <alternativeName>
        <fullName>50S ribosomal protein L1, chloroplastic</fullName>
    </alternativeName>
</protein>
<proteinExistence type="inferred from homology"/>